<sequence>MQGKIIKSLAGFYYVESEGQVYQTRARGNFRKRGETPYVGDIVDFSAEDNSEGYILAIHPRKNSLVRPPIVNIDQAVVIMSAKEPEFNSNLLDRFLILLEHKAIHPVVYISKMDLLDSPEEIKAIGRQYQAIGYNFVTSLEELLPLLADKITVFMGQTGVGKSTLLNRIAPELALETGEISDSLGRGRHTTRAVSFYNTHGGKIADTPGFSSLDYDIANAEDLNEAFPELRRLSHKCKFRSCTHTHEPKCAVKAALETGELWPVRYEHYLQFLSEIENRRETYKKVIKRK</sequence>
<accession>Q5XDX3</accession>
<evidence type="ECO:0000255" key="1">
    <source>
        <dbReference type="HAMAP-Rule" id="MF_01820"/>
    </source>
</evidence>
<evidence type="ECO:0000255" key="2">
    <source>
        <dbReference type="PROSITE-ProRule" id="PRU01058"/>
    </source>
</evidence>
<proteinExistence type="inferred from homology"/>
<organism>
    <name type="scientific">Streptococcus pyogenes serotype M6 (strain ATCC BAA-946 / MGAS10394)</name>
    <dbReference type="NCBI Taxonomy" id="286636"/>
    <lineage>
        <taxon>Bacteria</taxon>
        <taxon>Bacillati</taxon>
        <taxon>Bacillota</taxon>
        <taxon>Bacilli</taxon>
        <taxon>Lactobacillales</taxon>
        <taxon>Streptococcaceae</taxon>
        <taxon>Streptococcus</taxon>
    </lineage>
</organism>
<dbReference type="EC" id="3.6.1.-" evidence="1"/>
<dbReference type="EMBL" id="CP000003">
    <property type="protein sequence ID" value="AAT86390.1"/>
    <property type="molecule type" value="Genomic_DNA"/>
</dbReference>
<dbReference type="RefSeq" id="WP_011017322.1">
    <property type="nucleotide sequence ID" value="NC_006086.1"/>
</dbReference>
<dbReference type="SMR" id="Q5XDX3"/>
<dbReference type="KEGG" id="spa:M6_Spy0255"/>
<dbReference type="HOGENOM" id="CLU_033617_2_1_9"/>
<dbReference type="Proteomes" id="UP000001167">
    <property type="component" value="Chromosome"/>
</dbReference>
<dbReference type="GO" id="GO:0005737">
    <property type="term" value="C:cytoplasm"/>
    <property type="evidence" value="ECO:0007669"/>
    <property type="project" value="UniProtKB-SubCell"/>
</dbReference>
<dbReference type="GO" id="GO:0005525">
    <property type="term" value="F:GTP binding"/>
    <property type="evidence" value="ECO:0007669"/>
    <property type="project" value="UniProtKB-UniRule"/>
</dbReference>
<dbReference type="GO" id="GO:0003924">
    <property type="term" value="F:GTPase activity"/>
    <property type="evidence" value="ECO:0007669"/>
    <property type="project" value="UniProtKB-UniRule"/>
</dbReference>
<dbReference type="GO" id="GO:0046872">
    <property type="term" value="F:metal ion binding"/>
    <property type="evidence" value="ECO:0007669"/>
    <property type="project" value="UniProtKB-KW"/>
</dbReference>
<dbReference type="GO" id="GO:0019843">
    <property type="term" value="F:rRNA binding"/>
    <property type="evidence" value="ECO:0007669"/>
    <property type="project" value="UniProtKB-KW"/>
</dbReference>
<dbReference type="GO" id="GO:0042274">
    <property type="term" value="P:ribosomal small subunit biogenesis"/>
    <property type="evidence" value="ECO:0007669"/>
    <property type="project" value="UniProtKB-UniRule"/>
</dbReference>
<dbReference type="CDD" id="cd04466">
    <property type="entry name" value="S1_YloQ_GTPase"/>
    <property type="match status" value="1"/>
</dbReference>
<dbReference type="CDD" id="cd01854">
    <property type="entry name" value="YjeQ_EngC"/>
    <property type="match status" value="1"/>
</dbReference>
<dbReference type="Gene3D" id="2.40.50.140">
    <property type="entry name" value="Nucleic acid-binding proteins"/>
    <property type="match status" value="1"/>
</dbReference>
<dbReference type="Gene3D" id="3.40.50.300">
    <property type="entry name" value="P-loop containing nucleotide triphosphate hydrolases"/>
    <property type="match status" value="1"/>
</dbReference>
<dbReference type="Gene3D" id="1.10.40.50">
    <property type="entry name" value="Probable gtpase engc, domain 3"/>
    <property type="match status" value="1"/>
</dbReference>
<dbReference type="HAMAP" id="MF_01820">
    <property type="entry name" value="GTPase_RsgA"/>
    <property type="match status" value="1"/>
</dbReference>
<dbReference type="InterPro" id="IPR030378">
    <property type="entry name" value="G_CP_dom"/>
</dbReference>
<dbReference type="InterPro" id="IPR012340">
    <property type="entry name" value="NA-bd_OB-fold"/>
</dbReference>
<dbReference type="InterPro" id="IPR027417">
    <property type="entry name" value="P-loop_NTPase"/>
</dbReference>
<dbReference type="InterPro" id="IPR004881">
    <property type="entry name" value="Ribosome_biogen_GTPase_RsgA"/>
</dbReference>
<dbReference type="InterPro" id="IPR010914">
    <property type="entry name" value="RsgA_GTPase_dom"/>
</dbReference>
<dbReference type="InterPro" id="IPR031944">
    <property type="entry name" value="RsgA_N"/>
</dbReference>
<dbReference type="NCBIfam" id="TIGR00157">
    <property type="entry name" value="ribosome small subunit-dependent GTPase A"/>
    <property type="match status" value="1"/>
</dbReference>
<dbReference type="PANTHER" id="PTHR32120">
    <property type="entry name" value="SMALL RIBOSOMAL SUBUNIT BIOGENESIS GTPASE RSGA"/>
    <property type="match status" value="1"/>
</dbReference>
<dbReference type="PANTHER" id="PTHR32120:SF11">
    <property type="entry name" value="SMALL RIBOSOMAL SUBUNIT BIOGENESIS GTPASE RSGA 1, MITOCHONDRIAL-RELATED"/>
    <property type="match status" value="1"/>
</dbReference>
<dbReference type="Pfam" id="PF03193">
    <property type="entry name" value="RsgA_GTPase"/>
    <property type="match status" value="1"/>
</dbReference>
<dbReference type="Pfam" id="PF16745">
    <property type="entry name" value="RsgA_N"/>
    <property type="match status" value="1"/>
</dbReference>
<dbReference type="SUPFAM" id="SSF50249">
    <property type="entry name" value="Nucleic acid-binding proteins"/>
    <property type="match status" value="1"/>
</dbReference>
<dbReference type="SUPFAM" id="SSF52540">
    <property type="entry name" value="P-loop containing nucleoside triphosphate hydrolases"/>
    <property type="match status" value="1"/>
</dbReference>
<dbReference type="PROSITE" id="PS50936">
    <property type="entry name" value="ENGC_GTPASE"/>
    <property type="match status" value="1"/>
</dbReference>
<dbReference type="PROSITE" id="PS51721">
    <property type="entry name" value="G_CP"/>
    <property type="match status" value="1"/>
</dbReference>
<name>RSGA_STRP6</name>
<feature type="chain" id="PRO_0000171532" description="Small ribosomal subunit biogenesis GTPase RsgA">
    <location>
        <begin position="1"/>
        <end position="290"/>
    </location>
</feature>
<feature type="domain" description="CP-type G" evidence="2">
    <location>
        <begin position="62"/>
        <end position="213"/>
    </location>
</feature>
<feature type="binding site" evidence="1">
    <location>
        <begin position="111"/>
        <end position="114"/>
    </location>
    <ligand>
        <name>GTP</name>
        <dbReference type="ChEBI" id="CHEBI:37565"/>
    </ligand>
</feature>
<feature type="binding site" evidence="1">
    <location>
        <begin position="156"/>
        <end position="164"/>
    </location>
    <ligand>
        <name>GTP</name>
        <dbReference type="ChEBI" id="CHEBI:37565"/>
    </ligand>
</feature>
<feature type="binding site" evidence="1">
    <location>
        <position position="237"/>
    </location>
    <ligand>
        <name>Zn(2+)</name>
        <dbReference type="ChEBI" id="CHEBI:29105"/>
    </ligand>
</feature>
<feature type="binding site" evidence="1">
    <location>
        <position position="242"/>
    </location>
    <ligand>
        <name>Zn(2+)</name>
        <dbReference type="ChEBI" id="CHEBI:29105"/>
    </ligand>
</feature>
<feature type="binding site" evidence="1">
    <location>
        <position position="244"/>
    </location>
    <ligand>
        <name>Zn(2+)</name>
        <dbReference type="ChEBI" id="CHEBI:29105"/>
    </ligand>
</feature>
<feature type="binding site" evidence="1">
    <location>
        <position position="250"/>
    </location>
    <ligand>
        <name>Zn(2+)</name>
        <dbReference type="ChEBI" id="CHEBI:29105"/>
    </ligand>
</feature>
<keyword id="KW-0963">Cytoplasm</keyword>
<keyword id="KW-0342">GTP-binding</keyword>
<keyword id="KW-0378">Hydrolase</keyword>
<keyword id="KW-0479">Metal-binding</keyword>
<keyword id="KW-0547">Nucleotide-binding</keyword>
<keyword id="KW-0690">Ribosome biogenesis</keyword>
<keyword id="KW-0694">RNA-binding</keyword>
<keyword id="KW-0699">rRNA-binding</keyword>
<keyword id="KW-0862">Zinc</keyword>
<reference key="1">
    <citation type="journal article" date="2004" name="J. Infect. Dis.">
        <title>Progress toward characterization of the group A Streptococcus metagenome: complete genome sequence of a macrolide-resistant serotype M6 strain.</title>
        <authorList>
            <person name="Banks D.J."/>
            <person name="Porcella S.F."/>
            <person name="Barbian K.D."/>
            <person name="Beres S.B."/>
            <person name="Philips L.E."/>
            <person name="Voyich J.M."/>
            <person name="DeLeo F.R."/>
            <person name="Martin J.M."/>
            <person name="Somerville G.A."/>
            <person name="Musser J.M."/>
        </authorList>
    </citation>
    <scope>NUCLEOTIDE SEQUENCE [LARGE SCALE GENOMIC DNA]</scope>
    <source>
        <strain>ATCC BAA-946 / MGAS10394</strain>
    </source>
</reference>
<comment type="function">
    <text evidence="1">One of several proteins that assist in the late maturation steps of the functional core of the 30S ribosomal subunit. Helps release RbfA from mature subunits. May play a role in the assembly of ribosomal proteins into the subunit. Circularly permuted GTPase that catalyzes slow GTP hydrolysis, GTPase activity is stimulated by the 30S ribosomal subunit.</text>
</comment>
<comment type="cofactor">
    <cofactor evidence="1">
        <name>Zn(2+)</name>
        <dbReference type="ChEBI" id="CHEBI:29105"/>
    </cofactor>
    <text evidence="1">Binds 1 zinc ion per subunit.</text>
</comment>
<comment type="subunit">
    <text evidence="1">Monomer. Associates with 30S ribosomal subunit, binds 16S rRNA.</text>
</comment>
<comment type="subcellular location">
    <subcellularLocation>
        <location evidence="1">Cytoplasm</location>
    </subcellularLocation>
</comment>
<comment type="similarity">
    <text evidence="1">Belongs to the TRAFAC class YlqF/YawG GTPase family. RsgA subfamily.</text>
</comment>
<gene>
    <name evidence="1" type="primary">rsgA</name>
    <name type="ordered locus">M6_Spy0255</name>
</gene>
<protein>
    <recommendedName>
        <fullName evidence="1">Small ribosomal subunit biogenesis GTPase RsgA</fullName>
        <ecNumber evidence="1">3.6.1.-</ecNumber>
    </recommendedName>
</protein>